<feature type="chain" id="PRO_0000162610" description="Period circadian protein">
    <location>
        <begin position="1" status="less than"/>
        <end position="141" status="greater than"/>
    </location>
</feature>
<feature type="repeat" description="1">
    <location>
        <begin position="30"/>
        <end position="31"/>
    </location>
</feature>
<feature type="repeat" description="2">
    <location>
        <begin position="33"/>
        <end position="34"/>
    </location>
</feature>
<feature type="repeat" description="3">
    <location>
        <begin position="35"/>
        <end position="36"/>
    </location>
</feature>
<feature type="repeat" description="4">
    <location>
        <begin position="37"/>
        <end position="38"/>
    </location>
</feature>
<feature type="repeat" description="5">
    <location>
        <begin position="39"/>
        <end position="40"/>
    </location>
</feature>
<feature type="repeat" description="6">
    <location>
        <begin position="41"/>
        <end position="42"/>
    </location>
</feature>
<feature type="repeat" description="7">
    <location>
        <begin position="43"/>
        <end position="44"/>
    </location>
</feature>
<feature type="repeat" description="8">
    <location>
        <begin position="45"/>
        <end position="46"/>
    </location>
</feature>
<feature type="repeat" description="9">
    <location>
        <begin position="47"/>
        <end position="48"/>
    </location>
</feature>
<feature type="repeat" description="10">
    <location>
        <begin position="49"/>
        <end position="50"/>
    </location>
</feature>
<feature type="repeat" description="11">
    <location>
        <begin position="51"/>
        <end position="52"/>
    </location>
</feature>
<feature type="repeat" description="12">
    <location>
        <begin position="53"/>
        <end position="54"/>
    </location>
</feature>
<feature type="repeat" description="13">
    <location>
        <begin position="55"/>
        <end position="56"/>
    </location>
</feature>
<feature type="repeat" description="14">
    <location>
        <begin position="57"/>
        <end position="58"/>
    </location>
</feature>
<feature type="repeat" description="15">
    <location>
        <begin position="59"/>
        <end position="60"/>
    </location>
</feature>
<feature type="repeat" description="16">
    <location>
        <begin position="61"/>
        <end position="62"/>
    </location>
</feature>
<feature type="repeat" description="17">
    <location>
        <begin position="63"/>
        <end position="64"/>
    </location>
</feature>
<feature type="repeat" description="18">
    <location>
        <begin position="65"/>
        <end position="66"/>
    </location>
</feature>
<feature type="repeat" description="19">
    <location>
        <begin position="67"/>
        <end position="68"/>
    </location>
</feature>
<feature type="repeat" description="20; approximate">
    <location>
        <begin position="69"/>
        <end position="70"/>
    </location>
</feature>
<feature type="repeat" description="21">
    <location>
        <begin position="71"/>
        <end position="72"/>
    </location>
</feature>
<feature type="repeat" description="22; approximate">
    <location>
        <begin position="73"/>
        <end position="74"/>
    </location>
</feature>
<feature type="repeat" description="23">
    <location>
        <begin position="75"/>
        <end position="76"/>
    </location>
</feature>
<feature type="repeat" description="24; approximate">
    <location>
        <begin position="77"/>
        <end position="78"/>
    </location>
</feature>
<feature type="repeat" description="25">
    <location>
        <begin position="79"/>
        <end position="80"/>
    </location>
</feature>
<feature type="repeat" description="26; approximate">
    <location>
        <begin position="81"/>
        <end position="82"/>
    </location>
</feature>
<feature type="repeat" description="27">
    <location>
        <begin position="83"/>
        <end position="84"/>
    </location>
</feature>
<feature type="repeat" description="28; approximate">
    <location>
        <begin position="85"/>
        <end position="86"/>
    </location>
</feature>
<feature type="repeat" description="29">
    <location>
        <begin position="87"/>
        <end position="88"/>
    </location>
</feature>
<feature type="repeat" description="30">
    <location>
        <begin position="89"/>
        <end position="90"/>
    </location>
</feature>
<feature type="repeat" description="31; approximate">
    <location>
        <begin position="91"/>
        <end position="92"/>
    </location>
</feature>
<feature type="repeat" description="32">
    <location>
        <begin position="93"/>
        <end position="94"/>
    </location>
</feature>
<feature type="region of interest" description="Disordered" evidence="2">
    <location>
        <begin position="1"/>
        <end position="141"/>
    </location>
</feature>
<feature type="region of interest" description="32 X 2 AA approximate tandem repeats of G-T">
    <location>
        <begin position="30"/>
        <end position="94"/>
    </location>
</feature>
<feature type="compositionally biased region" description="Polar residues" evidence="2">
    <location>
        <begin position="11"/>
        <end position="23"/>
    </location>
</feature>
<feature type="compositionally biased region" description="Gly residues" evidence="2">
    <location>
        <begin position="29"/>
        <end position="68"/>
    </location>
</feature>
<feature type="compositionally biased region" description="Low complexity" evidence="2">
    <location>
        <begin position="69"/>
        <end position="85"/>
    </location>
</feature>
<feature type="compositionally biased region" description="Gly residues" evidence="2">
    <location>
        <begin position="101"/>
        <end position="113"/>
    </location>
</feature>
<feature type="compositionally biased region" description="Low complexity" evidence="2">
    <location>
        <begin position="114"/>
        <end position="129"/>
    </location>
</feature>
<feature type="compositionally biased region" description="Polar residues" evidence="2">
    <location>
        <begin position="130"/>
        <end position="141"/>
    </location>
</feature>
<feature type="non-terminal residue">
    <location>
        <position position="1"/>
    </location>
</feature>
<feature type="non-terminal residue">
    <location>
        <position position="141"/>
    </location>
</feature>
<accession>Q04537</accession>
<name>PER_DROSR</name>
<dbReference type="EMBL" id="L06341">
    <property type="protein sequence ID" value="AAA28764.1"/>
    <property type="molecule type" value="Genomic_DNA"/>
</dbReference>
<dbReference type="GO" id="GO:0005634">
    <property type="term" value="C:nucleus"/>
    <property type="evidence" value="ECO:0007669"/>
    <property type="project" value="UniProtKB-SubCell"/>
</dbReference>
<dbReference type="GO" id="GO:0048471">
    <property type="term" value="C:perinuclear region of cytoplasm"/>
    <property type="evidence" value="ECO:0007669"/>
    <property type="project" value="UniProtKB-SubCell"/>
</dbReference>
<dbReference type="GO" id="GO:0048511">
    <property type="term" value="P:rhythmic process"/>
    <property type="evidence" value="ECO:0007669"/>
    <property type="project" value="UniProtKB-KW"/>
</dbReference>
<sequence>EGSGGSGSSGHFTTGSNVHMSSVTNTSNGGTGGTGTGTGTGTGTGTGTGTGTGTGTGTGTGTGTGTGTASGTATGTASGTATGTANGTGTGKGTDTHTAGSGSGSGTGTGTGTGTTTTTTTGNNSSSSTPPVTLTESLLNK</sequence>
<protein>
    <recommendedName>
        <fullName>Period circadian protein</fullName>
    </recommendedName>
</protein>
<evidence type="ECO:0000250" key="1"/>
<evidence type="ECO:0000256" key="2">
    <source>
        <dbReference type="SAM" id="MobiDB-lite"/>
    </source>
</evidence>
<reference key="1">
    <citation type="journal article" date="1993" name="Mol. Biol. Evol.">
        <title>Molecular evolution of a repetitive region within the per gene of Drosophila.</title>
        <authorList>
            <person name="Peixoto A.A."/>
            <person name="Campesan S."/>
            <person name="Costa R.H."/>
            <person name="Kyriacou C.P."/>
        </authorList>
    </citation>
    <scope>NUCLEOTIDE SEQUENCE [GENOMIC DNA]</scope>
</reference>
<gene>
    <name type="primary">per</name>
</gene>
<proteinExistence type="inferred from homology"/>
<organism>
    <name type="scientific">Drosophila serrata</name>
    <name type="common">Fruit fly</name>
    <dbReference type="NCBI Taxonomy" id="7274"/>
    <lineage>
        <taxon>Eukaryota</taxon>
        <taxon>Metazoa</taxon>
        <taxon>Ecdysozoa</taxon>
        <taxon>Arthropoda</taxon>
        <taxon>Hexapoda</taxon>
        <taxon>Insecta</taxon>
        <taxon>Pterygota</taxon>
        <taxon>Neoptera</taxon>
        <taxon>Endopterygota</taxon>
        <taxon>Diptera</taxon>
        <taxon>Brachycera</taxon>
        <taxon>Muscomorpha</taxon>
        <taxon>Ephydroidea</taxon>
        <taxon>Drosophilidae</taxon>
        <taxon>Drosophila</taxon>
        <taxon>Sophophora</taxon>
    </lineage>
</organism>
<keyword id="KW-0090">Biological rhythms</keyword>
<keyword id="KW-0963">Cytoplasm</keyword>
<keyword id="KW-0539">Nucleus</keyword>
<keyword id="KW-0597">Phosphoprotein</keyword>
<keyword id="KW-0677">Repeat</keyword>
<comment type="function">
    <text evidence="1">Essential for biological clock functions. Determines the period length of circadian and ultradian rhythms; an increase in PER dosage leads to shortened circadian rhythms and a decrease leads to lengthened circadian rhythms. Essential for the circadian rhythmicity of locomotor activity, eclosion behavior, and for the rhythmic component of the male courtship song that originates in the thoracic nervous system. The biological cycle depends on the rhythmic formation and nuclear localization of the TIM-PER complex. Light induces the degradation of TIM, which promotes elimination of PER. Nuclear activity of the heterodimer coordinatively regulates PER and TIM transcription through a negative feedback loop. Behaves as a negative element in circadian transcriptional loop. Does not appear to bind DNA, suggesting indirect transcriptional inhibition (By similarity).</text>
</comment>
<comment type="subunit">
    <text evidence="1">Forms a heterodimer with timeless (TIM); the complex then translocates into the nucleus.</text>
</comment>
<comment type="subcellular location">
    <subcellularLocation>
        <location evidence="1">Nucleus</location>
    </subcellularLocation>
    <subcellularLocation>
        <location evidence="1">Cytoplasm</location>
        <location evidence="1">Perinuclear region</location>
    </subcellularLocation>
    <text evidence="1">Nuclear at specific periods of the day. First accumulates in the perinuclear region about one hour before translocation into the nucleus. Interaction with Tim is required for nuclear localization (By similarity).</text>
</comment>
<comment type="domain">
    <text evidence="1">The run of Gly-Thr is implicated in the maintenance of circadian period at different temperatures. Deletion of the repeat leads to a shortening of the courtship song cycle period, and thus could be important for determining features of species-specific mating behavior (By similarity).</text>
</comment>
<comment type="PTM">
    <text evidence="1">Phosphorylated with a circadian rhythmicity, probably by the double-time protein (dbt). Phosphorylation could be implicated in the stability of per monomer and in the formation of heterodimer per-tim (By similarity).</text>
</comment>